<dbReference type="EMBL" id="FM200053">
    <property type="protein sequence ID" value="CAR61166.1"/>
    <property type="molecule type" value="Genomic_DNA"/>
</dbReference>
<dbReference type="RefSeq" id="WP_000658627.1">
    <property type="nucleotide sequence ID" value="NC_011147.1"/>
</dbReference>
<dbReference type="SMR" id="B5BGG9"/>
<dbReference type="KEGG" id="sek:SSPA2918"/>
<dbReference type="HOGENOM" id="CLU_053334_0_0_6"/>
<dbReference type="UniPathway" id="UPA00704">
    <property type="reaction ID" value="UER00716"/>
</dbReference>
<dbReference type="Proteomes" id="UP000001869">
    <property type="component" value="Chromosome"/>
</dbReference>
<dbReference type="GO" id="GO:0005886">
    <property type="term" value="C:plasma membrane"/>
    <property type="evidence" value="ECO:0007669"/>
    <property type="project" value="TreeGrafter"/>
</dbReference>
<dbReference type="GO" id="GO:2001059">
    <property type="term" value="P:D-tagatose 6-phosphate catabolic process"/>
    <property type="evidence" value="ECO:0007669"/>
    <property type="project" value="UniProtKB-UniRule"/>
</dbReference>
<dbReference type="GO" id="GO:0019402">
    <property type="term" value="P:galactitol metabolic process"/>
    <property type="evidence" value="ECO:0007669"/>
    <property type="project" value="UniProtKB-KW"/>
</dbReference>
<dbReference type="GO" id="GO:0009401">
    <property type="term" value="P:phosphoenolpyruvate-dependent sugar phosphotransferase system"/>
    <property type="evidence" value="ECO:0007669"/>
    <property type="project" value="TreeGrafter"/>
</dbReference>
<dbReference type="FunFam" id="1.10.400.20:FF:000001">
    <property type="entry name" value="D-tagatose-1,6-bisphosphate aldolase subunit GatZ"/>
    <property type="match status" value="1"/>
</dbReference>
<dbReference type="FunFam" id="3.20.20.70:FF:000141">
    <property type="entry name" value="D-tagatose-1,6-bisphosphate aldolase subunit GatZ"/>
    <property type="match status" value="1"/>
</dbReference>
<dbReference type="Gene3D" id="3.20.20.70">
    <property type="entry name" value="Aldolase class I"/>
    <property type="match status" value="1"/>
</dbReference>
<dbReference type="Gene3D" id="1.10.400.20">
    <property type="entry name" value="putative tagatose 6-phosphate kinase domain like"/>
    <property type="match status" value="1"/>
</dbReference>
<dbReference type="HAMAP" id="MF_01296">
    <property type="entry name" value="Tagatose_aldol_GatZ"/>
    <property type="match status" value="1"/>
</dbReference>
<dbReference type="InterPro" id="IPR013785">
    <property type="entry name" value="Aldolase_TIM"/>
</dbReference>
<dbReference type="InterPro" id="IPR012062">
    <property type="entry name" value="GatZ/KbaZ-like"/>
</dbReference>
<dbReference type="InterPro" id="IPR050303">
    <property type="entry name" value="GatZ_KbaZ_carbometab"/>
</dbReference>
<dbReference type="InterPro" id="IPR023436">
    <property type="entry name" value="TagBP_ald_GatZ"/>
</dbReference>
<dbReference type="NCBIfam" id="TIGR02810">
    <property type="entry name" value="agaZ_gatZ"/>
    <property type="match status" value="1"/>
</dbReference>
<dbReference type="NCBIfam" id="NF011626">
    <property type="entry name" value="PRK15052.1"/>
    <property type="match status" value="1"/>
</dbReference>
<dbReference type="PANTHER" id="PTHR32502:SF12">
    <property type="entry name" value="D-TAGATOSE-1,6-BISPHOSPHATE ALDOLASE SUBUNIT GATZ"/>
    <property type="match status" value="1"/>
</dbReference>
<dbReference type="PANTHER" id="PTHR32502">
    <property type="entry name" value="N-ACETYLGALACTOSAMINE PERMEASE II COMPONENT-RELATED"/>
    <property type="match status" value="1"/>
</dbReference>
<dbReference type="Pfam" id="PF08013">
    <property type="entry name" value="GatZ_KbaZ-like"/>
    <property type="match status" value="1"/>
</dbReference>
<dbReference type="PIRSF" id="PIRSF009264">
    <property type="entry name" value="TagBP_ald_AgaZ"/>
    <property type="match status" value="1"/>
</dbReference>
<dbReference type="SUPFAM" id="SSF51569">
    <property type="entry name" value="Aldolase"/>
    <property type="match status" value="1"/>
</dbReference>
<sequence>MKEIIARHKAGEHLGICSVCSAHPLVIESALLFDLNTDNKVLIEATSNQVNQFGGYTGMKPADFRDFVYGIAQEVGFPRERLILGGDHLGPNCWQNEPAAAAMEKSVELIKAYVAAGFSKIHLDASMSCADDPTPLDPMVVARRAAVLCKAAEETANEEQKCHLTYVIGTEVPVPGGEASTIGSVHVTREVDAARTLETHQIAFRESGLEEALSRVIAIVVQPGVEFDHTQIIHYQPQAAQALSAWIKETPMVYEAHSTDYQTRQAYRALVRDHYAILKVGPALTFALREAIFALAQMENELISPEQRSRVLEVIDEVMLNEPGYWKKYYRPTWSQAMVDIHFSLSDRIRYYWPHPRIRQSVEKLIANLNNVTLPLGLISQFMPVQFERLSEGVLTPTPHNLIIDKIQDVLRAYRFGCTPDVA</sequence>
<comment type="function">
    <text evidence="1">Component of the tagatose-1,6-bisphosphate aldolase GatYZ that is required for full activity and stability of the Y subunit. Could have a chaperone-like function for the proper and stable folding of GatY. When expressed alone, GatZ does not show any aldolase activity. Is involved in the catabolism of galactitol.</text>
</comment>
<comment type="pathway">
    <text evidence="1">Carbohydrate metabolism; D-tagatose 6-phosphate degradation; D-glyceraldehyde 3-phosphate and glycerone phosphate from D-tagatose 6-phosphate: step 2/2.</text>
</comment>
<comment type="subunit">
    <text evidence="1">Forms a complex with GatY.</text>
</comment>
<comment type="similarity">
    <text evidence="1">Belongs to the GatZ/KbaZ family. GatZ subfamily.</text>
</comment>
<feature type="chain" id="PRO_0000372515" description="D-tagatose-1,6-bisphosphate aldolase subunit GatZ">
    <location>
        <begin position="1"/>
        <end position="423"/>
    </location>
</feature>
<evidence type="ECO:0000255" key="1">
    <source>
        <dbReference type="HAMAP-Rule" id="MF_01296"/>
    </source>
</evidence>
<accession>B5BGG9</accession>
<gene>
    <name evidence="1" type="primary">gatZ</name>
    <name type="ordered locus">SSPA2918</name>
</gene>
<name>GATZ_SALPK</name>
<protein>
    <recommendedName>
        <fullName evidence="1">D-tagatose-1,6-bisphosphate aldolase subunit GatZ</fullName>
    </recommendedName>
</protein>
<organism>
    <name type="scientific">Salmonella paratyphi A (strain AKU_12601)</name>
    <dbReference type="NCBI Taxonomy" id="554290"/>
    <lineage>
        <taxon>Bacteria</taxon>
        <taxon>Pseudomonadati</taxon>
        <taxon>Pseudomonadota</taxon>
        <taxon>Gammaproteobacteria</taxon>
        <taxon>Enterobacterales</taxon>
        <taxon>Enterobacteriaceae</taxon>
        <taxon>Salmonella</taxon>
    </lineage>
</organism>
<reference key="1">
    <citation type="journal article" date="2009" name="BMC Genomics">
        <title>Pseudogene accumulation in the evolutionary histories of Salmonella enterica serovars Paratyphi A and Typhi.</title>
        <authorList>
            <person name="Holt K.E."/>
            <person name="Thomson N.R."/>
            <person name="Wain J."/>
            <person name="Langridge G.C."/>
            <person name="Hasan R."/>
            <person name="Bhutta Z.A."/>
            <person name="Quail M.A."/>
            <person name="Norbertczak H."/>
            <person name="Walker D."/>
            <person name="Simmonds M."/>
            <person name="White B."/>
            <person name="Bason N."/>
            <person name="Mungall K."/>
            <person name="Dougan G."/>
            <person name="Parkhill J."/>
        </authorList>
    </citation>
    <scope>NUCLEOTIDE SEQUENCE [LARGE SCALE GENOMIC DNA]</scope>
    <source>
        <strain>AKU_12601</strain>
    </source>
</reference>
<keyword id="KW-0298">Galactitol metabolism</keyword>
<proteinExistence type="inferred from homology"/>